<name>RPOZ_BURO0</name>
<proteinExistence type="inferred from homology"/>
<reference key="1">
    <citation type="submission" date="2008-02" db="EMBL/GenBank/DDBJ databases">
        <title>Complete sequence of chromosome 1 of Burkholderia cenocepacia MC0-3.</title>
        <authorList>
            <person name="Copeland A."/>
            <person name="Lucas S."/>
            <person name="Lapidus A."/>
            <person name="Barry K."/>
            <person name="Bruce D."/>
            <person name="Goodwin L."/>
            <person name="Glavina del Rio T."/>
            <person name="Dalin E."/>
            <person name="Tice H."/>
            <person name="Pitluck S."/>
            <person name="Chain P."/>
            <person name="Malfatti S."/>
            <person name="Shin M."/>
            <person name="Vergez L."/>
            <person name="Schmutz J."/>
            <person name="Larimer F."/>
            <person name="Land M."/>
            <person name="Hauser L."/>
            <person name="Kyrpides N."/>
            <person name="Mikhailova N."/>
            <person name="Tiedje J."/>
            <person name="Richardson P."/>
        </authorList>
    </citation>
    <scope>NUCLEOTIDE SEQUENCE [LARGE SCALE GENOMIC DNA]</scope>
    <source>
        <strain>MC0-3</strain>
    </source>
</reference>
<keyword id="KW-0240">DNA-directed RNA polymerase</keyword>
<keyword id="KW-0548">Nucleotidyltransferase</keyword>
<keyword id="KW-0804">Transcription</keyword>
<keyword id="KW-0808">Transferase</keyword>
<feature type="chain" id="PRO_1000121196" description="DNA-directed RNA polymerase subunit omega">
    <location>
        <begin position="1"/>
        <end position="67"/>
    </location>
</feature>
<accession>B1JXM5</accession>
<protein>
    <recommendedName>
        <fullName evidence="1">DNA-directed RNA polymerase subunit omega</fullName>
        <shortName evidence="1">RNAP omega subunit</shortName>
        <ecNumber evidence="1">2.7.7.6</ecNumber>
    </recommendedName>
    <alternativeName>
        <fullName evidence="1">RNA polymerase omega subunit</fullName>
    </alternativeName>
    <alternativeName>
        <fullName evidence="1">Transcriptase subunit omega</fullName>
    </alternativeName>
</protein>
<gene>
    <name evidence="1" type="primary">rpoZ</name>
    <name type="ordered locus">Bcenmc03_0960</name>
</gene>
<comment type="function">
    <text evidence="1">Promotes RNA polymerase assembly. Latches the N- and C-terminal regions of the beta' subunit thereby facilitating its interaction with the beta and alpha subunits.</text>
</comment>
<comment type="catalytic activity">
    <reaction evidence="1">
        <text>RNA(n) + a ribonucleoside 5'-triphosphate = RNA(n+1) + diphosphate</text>
        <dbReference type="Rhea" id="RHEA:21248"/>
        <dbReference type="Rhea" id="RHEA-COMP:14527"/>
        <dbReference type="Rhea" id="RHEA-COMP:17342"/>
        <dbReference type="ChEBI" id="CHEBI:33019"/>
        <dbReference type="ChEBI" id="CHEBI:61557"/>
        <dbReference type="ChEBI" id="CHEBI:140395"/>
        <dbReference type="EC" id="2.7.7.6"/>
    </reaction>
</comment>
<comment type="subunit">
    <text evidence="1">The RNAP catalytic core consists of 2 alpha, 1 beta, 1 beta' and 1 omega subunit. When a sigma factor is associated with the core the holoenzyme is formed, which can initiate transcription.</text>
</comment>
<comment type="similarity">
    <text evidence="1">Belongs to the RNA polymerase subunit omega family.</text>
</comment>
<evidence type="ECO:0000255" key="1">
    <source>
        <dbReference type="HAMAP-Rule" id="MF_00366"/>
    </source>
</evidence>
<dbReference type="EC" id="2.7.7.6" evidence="1"/>
<dbReference type="EMBL" id="CP000958">
    <property type="protein sequence ID" value="ACA90137.1"/>
    <property type="molecule type" value="Genomic_DNA"/>
</dbReference>
<dbReference type="RefSeq" id="WP_006025620.1">
    <property type="nucleotide sequence ID" value="NC_010508.1"/>
</dbReference>
<dbReference type="SMR" id="B1JXM5"/>
<dbReference type="GeneID" id="98102617"/>
<dbReference type="KEGG" id="bcm:Bcenmc03_0960"/>
<dbReference type="HOGENOM" id="CLU_125406_5_2_4"/>
<dbReference type="Proteomes" id="UP000002169">
    <property type="component" value="Chromosome 1"/>
</dbReference>
<dbReference type="GO" id="GO:0000428">
    <property type="term" value="C:DNA-directed RNA polymerase complex"/>
    <property type="evidence" value="ECO:0007669"/>
    <property type="project" value="UniProtKB-KW"/>
</dbReference>
<dbReference type="GO" id="GO:0003677">
    <property type="term" value="F:DNA binding"/>
    <property type="evidence" value="ECO:0007669"/>
    <property type="project" value="UniProtKB-UniRule"/>
</dbReference>
<dbReference type="GO" id="GO:0003899">
    <property type="term" value="F:DNA-directed RNA polymerase activity"/>
    <property type="evidence" value="ECO:0007669"/>
    <property type="project" value="UniProtKB-UniRule"/>
</dbReference>
<dbReference type="GO" id="GO:0006351">
    <property type="term" value="P:DNA-templated transcription"/>
    <property type="evidence" value="ECO:0007669"/>
    <property type="project" value="UniProtKB-UniRule"/>
</dbReference>
<dbReference type="Gene3D" id="3.90.940.10">
    <property type="match status" value="1"/>
</dbReference>
<dbReference type="HAMAP" id="MF_00366">
    <property type="entry name" value="RNApol_bact_RpoZ"/>
    <property type="match status" value="1"/>
</dbReference>
<dbReference type="InterPro" id="IPR003716">
    <property type="entry name" value="DNA-dir_RNA_pol_omega"/>
</dbReference>
<dbReference type="InterPro" id="IPR006110">
    <property type="entry name" value="Pol_omega/Rpo6/RPB6"/>
</dbReference>
<dbReference type="InterPro" id="IPR036161">
    <property type="entry name" value="RPB6/omega-like_sf"/>
</dbReference>
<dbReference type="NCBIfam" id="TIGR00690">
    <property type="entry name" value="rpoZ"/>
    <property type="match status" value="1"/>
</dbReference>
<dbReference type="PANTHER" id="PTHR34476">
    <property type="entry name" value="DNA-DIRECTED RNA POLYMERASE SUBUNIT OMEGA"/>
    <property type="match status" value="1"/>
</dbReference>
<dbReference type="PANTHER" id="PTHR34476:SF1">
    <property type="entry name" value="DNA-DIRECTED RNA POLYMERASE SUBUNIT OMEGA"/>
    <property type="match status" value="1"/>
</dbReference>
<dbReference type="Pfam" id="PF01192">
    <property type="entry name" value="RNA_pol_Rpb6"/>
    <property type="match status" value="1"/>
</dbReference>
<dbReference type="SMART" id="SM01409">
    <property type="entry name" value="RNA_pol_Rpb6"/>
    <property type="match status" value="1"/>
</dbReference>
<dbReference type="SUPFAM" id="SSF63562">
    <property type="entry name" value="RPB6/omega subunit-like"/>
    <property type="match status" value="1"/>
</dbReference>
<sequence>MARITVEDCLKQIPNRFELALAATYRARQLAQGHTPKIESRDKPTVVALREIAAGQVGVEMLKKVPV</sequence>
<organism>
    <name type="scientific">Burkholderia orbicola (strain MC0-3)</name>
    <dbReference type="NCBI Taxonomy" id="406425"/>
    <lineage>
        <taxon>Bacteria</taxon>
        <taxon>Pseudomonadati</taxon>
        <taxon>Pseudomonadota</taxon>
        <taxon>Betaproteobacteria</taxon>
        <taxon>Burkholderiales</taxon>
        <taxon>Burkholderiaceae</taxon>
        <taxon>Burkholderia</taxon>
        <taxon>Burkholderia cepacia complex</taxon>
        <taxon>Burkholderia orbicola</taxon>
    </lineage>
</organism>